<keyword id="KW-0349">Heme</keyword>
<keyword id="KW-0408">Iron</keyword>
<keyword id="KW-0472">Membrane</keyword>
<keyword id="KW-0479">Metal-binding</keyword>
<keyword id="KW-0503">Monooxygenase</keyword>
<keyword id="KW-0560">Oxidoreductase</keyword>
<keyword id="KW-0735">Signal-anchor</keyword>
<keyword id="KW-0812">Transmembrane</keyword>
<keyword id="KW-1133">Transmembrane helix</keyword>
<name>CP180_ORIMA</name>
<comment type="function">
    <text evidence="4">Involved in the biosynthesis of phenolic monoterpenes natural products thymol and carvacrol which have a broad range of biological activities acting as antimicrobial compounds, insecticides, antioxidants and pharmaceutical agents (Ref.1). Catalyzes the C2-hydroxylation of gamma-terpinene to produce carvacrol (Ref.1). Mediates also the C6-hydroxylation of (4S)-limonene and (4R)-limonene to form carveol (Ref.1).</text>
</comment>
<comment type="catalytic activity">
    <reaction evidence="4">
        <text>gamma-terpinene + 2 reduced [NADPH--hemoprotein reductase] + 2 O2 = carvacrol + 2 oxidized [NADPH--hemoprotein reductase] + 3 H2O + 2 H(+)</text>
        <dbReference type="Rhea" id="RHEA:67404"/>
        <dbReference type="Rhea" id="RHEA-COMP:11964"/>
        <dbReference type="Rhea" id="RHEA-COMP:11965"/>
        <dbReference type="ChEBI" id="CHEBI:3440"/>
        <dbReference type="ChEBI" id="CHEBI:10577"/>
        <dbReference type="ChEBI" id="CHEBI:15377"/>
        <dbReference type="ChEBI" id="CHEBI:15378"/>
        <dbReference type="ChEBI" id="CHEBI:15379"/>
        <dbReference type="ChEBI" id="CHEBI:57618"/>
        <dbReference type="ChEBI" id="CHEBI:58210"/>
    </reaction>
    <physiologicalReaction direction="left-to-right" evidence="4">
        <dbReference type="Rhea" id="RHEA:67405"/>
    </physiologicalReaction>
</comment>
<comment type="catalytic activity">
    <reaction evidence="4">
        <text>(4S)-limonene + reduced [NADPH--hemoprotein reductase] + O2 = (1S,5R)-carveol + oxidized [NADPH--hemoprotein reductase] + H2O + H(+)</text>
        <dbReference type="Rhea" id="RHEA:17945"/>
        <dbReference type="Rhea" id="RHEA-COMP:11964"/>
        <dbReference type="Rhea" id="RHEA-COMP:11965"/>
        <dbReference type="ChEBI" id="CHEBI:15377"/>
        <dbReference type="ChEBI" id="CHEBI:15378"/>
        <dbReference type="ChEBI" id="CHEBI:15379"/>
        <dbReference type="ChEBI" id="CHEBI:15383"/>
        <dbReference type="ChEBI" id="CHEBI:15389"/>
        <dbReference type="ChEBI" id="CHEBI:57618"/>
        <dbReference type="ChEBI" id="CHEBI:58210"/>
        <dbReference type="EC" id="1.14.14.51"/>
    </reaction>
    <physiologicalReaction direction="left-to-right" evidence="4">
        <dbReference type="Rhea" id="RHEA:17946"/>
    </physiologicalReaction>
</comment>
<comment type="catalytic activity">
    <reaction evidence="4">
        <text>(4R)-limonene + reduced [NADPH--hemoprotein reductase] + O2 = (1R,5S)-carveol + oxidized [NADPH--hemoprotein reductase] + H2O + H(+)</text>
        <dbReference type="Rhea" id="RHEA:18957"/>
        <dbReference type="Rhea" id="RHEA-COMP:11964"/>
        <dbReference type="Rhea" id="RHEA-COMP:11965"/>
        <dbReference type="ChEBI" id="CHEBI:15377"/>
        <dbReference type="ChEBI" id="CHEBI:15378"/>
        <dbReference type="ChEBI" id="CHEBI:15379"/>
        <dbReference type="ChEBI" id="CHEBI:15382"/>
        <dbReference type="ChEBI" id="CHEBI:15388"/>
        <dbReference type="ChEBI" id="CHEBI:57618"/>
        <dbReference type="ChEBI" id="CHEBI:58210"/>
        <dbReference type="EC" id="1.14.14.53"/>
    </reaction>
    <physiologicalReaction direction="left-to-right" evidence="4">
        <dbReference type="Rhea" id="RHEA:18958"/>
    </physiologicalReaction>
</comment>
<comment type="cofactor">
    <cofactor evidence="1">
        <name>heme</name>
        <dbReference type="ChEBI" id="CHEBI:30413"/>
    </cofactor>
</comment>
<comment type="pathway">
    <text evidence="4">Secondary metabolite biosynthesis; terpenoid biosynthesis.</text>
</comment>
<comment type="subcellular location">
    <subcellularLocation>
        <location evidence="2">Membrane</location>
        <topology evidence="14">Single-pass type II membrane protein</topology>
    </subcellularLocation>
</comment>
<comment type="biotechnology">
    <text evidence="6 7 10 12">The monoterpenic phenol thymol is widely used as a fragrance and a flavoring ingredient in food and cosmetic industries (PubMed:29785774). Its derivatives have also several biological and pharmacological properties such as antimicrobial, antioxidant, anticarcinogenesis, anti-inflammatory and antispasmodic activities (PubMed:29785774, PubMed:29874939). Medical applications include the treatment of disorders affecting the respiratory, nervous, and cardiovascular systems (PubMed:29785774). It may also act as a growth enhancer and immunomodulator (PubMed:29785774). Thymol may also have antiviral activity toward COVID-19 by binding to the S1 receptor binding domain of the SARS-CoV-2 spike (S) glycoprotein (PubMed:32834111, PubMed:33855010).</text>
</comment>
<comment type="biotechnology">
    <text evidence="5 7 8 9 10 11 12">The monoterpenic phenol carvacrol is commonly used as a fragrance and a food flavoring ingredient and preservative (PubMed:24915411). Its derivatives exhibit also various biological and pharmacological properties including antioxidant, antibacterial, antifungal, insecticid, nematicid, anticancer, anti-inflammatory, hepatoprotective, spasmolytic, and vasorelaxant (PubMed:24915411, PubMed:29874939, PubMed:30836858, PubMed:33664752). Phytochemical inhibitor targeting the main SARS-CoV-2 viral protease (Mpro) and ACE2 in human host cells, carvacrol is a possible candidate for treating COVID-19 (PubMed:32448034, PubMed:33664752). Carvacrol may also have antiviral activity toward COVID-19 by binding to the S1 receptor binding domain of the SARS-CoV-2 spike (S) glycoprotein (PubMed:32834111, PubMed:33855010).</text>
</comment>
<comment type="similarity">
    <text evidence="14">Belongs to the cytochrome P450 family.</text>
</comment>
<sequence>MDISISWVVIIVFVLSYLILMDKWRASKLPGNPPPSPPKLPVIGHLHLLRGGLPQHVLRGITQKYGAVAHLQLGEVHSVVLSSAESTKQAMKVLDPTFADRFDSIGSQIMWHNNDDMIFSRYNDHWRQIRKICVSELLSPRNVRSFGFIRQDEMARLIRVFESSEGAAINASEEISKMSCAIVSRAAFGSVLKDQGKLADLVKEALSMASGFELADLYPSSWLLNLLCVNKYRLQRMRGRLDNILDGFLEEHKVKKSGEFGGEDIVDVLYRMQKDTEMKAPITNNGIKGFIFDVFSAGTETSATTIQWALSELMKNPEKMVKAQAEVREKLKGKTNPDVADVQELKYLHSVVKETLRLHPPFPLIPRLCKEECEVTGYTIPAKTRTLVNVWSIGRDPAYWKDPDTFNPDRFDEVSRDVIGNDFELIPFGAGRRVCPGLHFGLANVEVPLAQLLYHFDYKLPSAMTAADMDMSETPGLSGPRKNPLIMIPTIHNPTS</sequence>
<accession>P0DO40</accession>
<organism>
    <name type="scientific">Origanum majorana</name>
    <name type="common">Sweet marjoram</name>
    <name type="synonym">Majorana hortensis</name>
    <dbReference type="NCBI Taxonomy" id="268884"/>
    <lineage>
        <taxon>Eukaryota</taxon>
        <taxon>Viridiplantae</taxon>
        <taxon>Streptophyta</taxon>
        <taxon>Embryophyta</taxon>
        <taxon>Tracheophyta</taxon>
        <taxon>Spermatophyta</taxon>
        <taxon>Magnoliopsida</taxon>
        <taxon>eudicotyledons</taxon>
        <taxon>Gunneridae</taxon>
        <taxon>Pentapetalae</taxon>
        <taxon>asterids</taxon>
        <taxon>lamiids</taxon>
        <taxon>Lamiales</taxon>
        <taxon>Lamiaceae</taxon>
        <taxon>Nepetoideae</taxon>
        <taxon>Mentheae</taxon>
        <taxon>Origanum</taxon>
    </lineage>
</organism>
<reference key="1">
    <citation type="thesis" date="2011" institute="Friedrich Schiller University of Jena" country="Germany">
        <title>Biosynthesis of the phenolic monoterpenes, thymol and carvacrol, by terpene synthases and cytochrome P450s in oregano and thyme.</title>
        <authorList>
            <person name="Crocoll C."/>
        </authorList>
    </citation>
    <scope>NUCLEOTIDE SEQUENCE [MRNA]</scope>
    <scope>FUNCTION</scope>
    <scope>CATALYTIC ACTIVITY</scope>
    <scope>PATHWAY</scope>
    <scope>BIOPHYSICOCHEMICAL PROPERTIES</scope>
    <source>
        <strain>cv. gT</strain>
        <tissue>Leaf</tissue>
    </source>
</reference>
<reference key="2">
    <citation type="journal article" date="2015" name="Crit. Rev. Food Sci. Nutr.">
        <title>The bioactivity and toxicological actions of carvacrol.</title>
        <authorList>
            <person name="Suntres Z.E."/>
            <person name="Coccimiglio J."/>
            <person name="Alipour M."/>
        </authorList>
    </citation>
    <scope>REVIEW ON CARVACROL</scope>
    <scope>BIOTECHNOLOGY</scope>
</reference>
<reference key="3">
    <citation type="journal article" date="2018" name="Phytother. Res.">
        <title>Thymol, thyme, and other plant sources: Health and potential uses.</title>
        <authorList>
            <person name="Salehi B."/>
            <person name="Mishra A.P."/>
            <person name="Shukla I."/>
            <person name="Sharifi-Rad M."/>
            <person name="Contreras M.D.M."/>
            <person name="Segura-Carretero A."/>
            <person name="Fathi H."/>
            <person name="Nasrabadi N.N."/>
            <person name="Kobarfard F."/>
            <person name="Sharifi-Rad J."/>
        </authorList>
    </citation>
    <scope>REVIEW ON THYMOL</scope>
    <scope>BIOTECHNOLOGY</scope>
</reference>
<reference key="4">
    <citation type="journal article" date="2019" name="Nat. Prod. Res.">
        <title>Synthesis and antifungal activity of carvacrol and thymol esters with heteroaromatic carboxylic acids.</title>
        <authorList>
            <person name="Wang K."/>
            <person name="Jiang S."/>
            <person name="Yang Y."/>
            <person name="Fan L."/>
            <person name="Su F."/>
            <person name="Ye M."/>
        </authorList>
    </citation>
    <scope>REVIEW ON CARVACROL AND THYMOL</scope>
    <scope>BIOTECHNOLOGY</scope>
</reference>
<reference key="5">
    <citation type="journal article" date="2020" name="Front. Plant Sci.">
        <title>Carvacrol, a plant metabolite targeting viral protease (Mpro) and ACE2 in host cells can be a possible candidate for COVID-19.</title>
        <authorList>
            <person name="Javed H."/>
            <person name="Meeran M.F.N."/>
            <person name="Jha N.K."/>
            <person name="Ojha S."/>
        </authorList>
    </citation>
    <scope>REVIEW ON CARVACROL EFFECTS ON COVID-19</scope>
    <scope>BIOTECHNOLOGY</scope>
</reference>
<reference key="6">
    <citation type="journal article" date="2020" name="J. Biomol. Struct. Dyn.">
        <title>Identification of phytochemical inhibitors against main protease of COVID-19 using molecular modeling approaches.</title>
        <authorList>
            <person name="Kumar A."/>
            <person name="Choudhir G."/>
            <person name="Shukla S.K."/>
            <person name="Sharma M."/>
            <person name="Tyagi P."/>
            <person name="Bhushan A."/>
            <person name="Rathore M."/>
        </authorList>
    </citation>
    <scope>REVIEW ON CARVACROL EFFECTS ON COVID-19</scope>
    <scope>BIOTECHNOLOGY</scope>
</reference>
<reference key="7">
    <citation type="journal article" date="2020" name="J. Biomol. Struct. Dyn.">
        <title>Synthesis, anticholinesterase activity and molecular modeling studies of novel carvacrol-substituted amide derivatives.</title>
        <authorList>
            <person name="Zengin Kurt B."/>
            <person name="Durdagi S."/>
            <person name="Celebi G."/>
            <person name="Ekhteiari Salmas R."/>
            <person name="Sonmez F."/>
        </authorList>
    </citation>
    <scope>REVIEW ON CARVACROL DERIVATIVES</scope>
    <scope>BIOTECHNOLOGY</scope>
</reference>
<reference key="8">
    <citation type="journal article" date="2020" name="J. Mol. Struct.">
        <title>Computational evaluation of major components from plant essential oils as potent inhibitors of SARS-CoV-2 spike protein.</title>
        <authorList>
            <person name="Kulkarni S.A."/>
            <person name="Nagarajan S.K."/>
            <person name="Ramesh V."/>
            <person name="Palaniyandi V."/>
            <person name="Selvam S.P."/>
            <person name="Madhavan T."/>
        </authorList>
    </citation>
    <scope>REVIEW ON PLANT ESSENTIAL OILS EFFECTS ON COVID-19</scope>
    <scope>BIOTECHNOLOGY</scope>
</reference>
<reference key="9">
    <citation type="journal article" date="2021" name="Front. Chem.">
        <title>Antiviral essential oil components against SARS-CoV-2 in pre-procedural mouth rinses for dental settings during COVID-19: A computational study.</title>
        <authorList>
            <person name="Yadalam P.K."/>
            <person name="Varatharajan K."/>
            <person name="Rajapandian K."/>
            <person name="Chopra P."/>
            <person name="Arumuganainar D."/>
            <person name="Nagarathnam T."/>
            <person name="Sohn H."/>
            <person name="Madhavan T."/>
        </authorList>
    </citation>
    <scope>REVIEW ON PLANT ESSENTIAL OILS EFFECTS ON COVID-19</scope>
    <scope>BIOTECHNOLOGY</scope>
</reference>
<proteinExistence type="evidence at protein level"/>
<protein>
    <recommendedName>
        <fullName evidence="13">Cytochrome P450 71D180</fullName>
    </recommendedName>
    <alternativeName>
        <fullName evidence="15">Carvacrol synthase</fullName>
        <ecNumber evidence="4">1.14.14.-</ecNumber>
    </alternativeName>
    <alternativeName>
        <fullName evidence="15">Carveol synthase</fullName>
        <ecNumber evidence="4">1.14.14.51</ecNumber>
        <ecNumber evidence="4">1.14.14.53</ecNumber>
    </alternativeName>
    <alternativeName>
        <fullName evidence="15">Gamma-terpinene hydroxylase</fullName>
    </alternativeName>
    <alternativeName>
        <fullName evidence="15">Limonene hydroxylase</fullName>
    </alternativeName>
</protein>
<gene>
    <name evidence="13" type="primary">CYP71D180</name>
</gene>
<dbReference type="EC" id="1.14.14.-" evidence="4"/>
<dbReference type="EC" id="1.14.14.51" evidence="4"/>
<dbReference type="EC" id="1.14.14.53" evidence="4"/>
<dbReference type="SMR" id="P0DO40"/>
<dbReference type="UniPathway" id="UPA00213"/>
<dbReference type="GO" id="GO:0016020">
    <property type="term" value="C:membrane"/>
    <property type="evidence" value="ECO:0007669"/>
    <property type="project" value="UniProtKB-SubCell"/>
</dbReference>
<dbReference type="GO" id="GO:0020037">
    <property type="term" value="F:heme binding"/>
    <property type="evidence" value="ECO:0007669"/>
    <property type="project" value="InterPro"/>
</dbReference>
<dbReference type="GO" id="GO:0005506">
    <property type="term" value="F:iron ion binding"/>
    <property type="evidence" value="ECO:0007669"/>
    <property type="project" value="InterPro"/>
</dbReference>
<dbReference type="GO" id="GO:0004497">
    <property type="term" value="F:monooxygenase activity"/>
    <property type="evidence" value="ECO:0007669"/>
    <property type="project" value="UniProtKB-KW"/>
</dbReference>
<dbReference type="GO" id="GO:0016705">
    <property type="term" value="F:oxidoreductase activity, acting on paired donors, with incorporation or reduction of molecular oxygen"/>
    <property type="evidence" value="ECO:0007669"/>
    <property type="project" value="InterPro"/>
</dbReference>
<dbReference type="GO" id="GO:0016114">
    <property type="term" value="P:terpenoid biosynthetic process"/>
    <property type="evidence" value="ECO:0007669"/>
    <property type="project" value="UniProtKB-UniPathway"/>
</dbReference>
<dbReference type="CDD" id="cd11072">
    <property type="entry name" value="CYP71-like"/>
    <property type="match status" value="1"/>
</dbReference>
<dbReference type="FunFam" id="1.10.630.10:FF:000043">
    <property type="entry name" value="Cytochrome P450 99A2"/>
    <property type="match status" value="1"/>
</dbReference>
<dbReference type="Gene3D" id="1.10.630.10">
    <property type="entry name" value="Cytochrome P450"/>
    <property type="match status" value="1"/>
</dbReference>
<dbReference type="InterPro" id="IPR052306">
    <property type="entry name" value="CYP450_71D"/>
</dbReference>
<dbReference type="InterPro" id="IPR001128">
    <property type="entry name" value="Cyt_P450"/>
</dbReference>
<dbReference type="InterPro" id="IPR017972">
    <property type="entry name" value="Cyt_P450_CS"/>
</dbReference>
<dbReference type="InterPro" id="IPR002401">
    <property type="entry name" value="Cyt_P450_E_grp-I"/>
</dbReference>
<dbReference type="InterPro" id="IPR036396">
    <property type="entry name" value="Cyt_P450_sf"/>
</dbReference>
<dbReference type="PANTHER" id="PTHR47953:SF19">
    <property type="entry name" value="OS06G0641600 PROTEIN"/>
    <property type="match status" value="1"/>
</dbReference>
<dbReference type="PANTHER" id="PTHR47953">
    <property type="entry name" value="OS08G0105600 PROTEIN"/>
    <property type="match status" value="1"/>
</dbReference>
<dbReference type="Pfam" id="PF00067">
    <property type="entry name" value="p450"/>
    <property type="match status" value="1"/>
</dbReference>
<dbReference type="PRINTS" id="PR00463">
    <property type="entry name" value="EP450I"/>
</dbReference>
<dbReference type="PRINTS" id="PR00385">
    <property type="entry name" value="P450"/>
</dbReference>
<dbReference type="SUPFAM" id="SSF48264">
    <property type="entry name" value="Cytochrome P450"/>
    <property type="match status" value="1"/>
</dbReference>
<dbReference type="PROSITE" id="PS00086">
    <property type="entry name" value="CYTOCHROME_P450"/>
    <property type="match status" value="1"/>
</dbReference>
<evidence type="ECO:0000250" key="1">
    <source>
        <dbReference type="UniProtKB" id="Q96242"/>
    </source>
</evidence>
<evidence type="ECO:0000255" key="2"/>
<evidence type="ECO:0000256" key="3">
    <source>
        <dbReference type="SAM" id="MobiDB-lite"/>
    </source>
</evidence>
<evidence type="ECO:0000269" key="4">
    <source ref="1"/>
</evidence>
<evidence type="ECO:0000303" key="5">
    <source>
    </source>
</evidence>
<evidence type="ECO:0000303" key="6">
    <source>
    </source>
</evidence>
<evidence type="ECO:0000303" key="7">
    <source>
    </source>
</evidence>
<evidence type="ECO:0000303" key="8">
    <source>
    </source>
</evidence>
<evidence type="ECO:0000303" key="9">
    <source>
    </source>
</evidence>
<evidence type="ECO:0000303" key="10">
    <source>
    </source>
</evidence>
<evidence type="ECO:0000303" key="11">
    <source>
    </source>
</evidence>
<evidence type="ECO:0000303" key="12">
    <source>
    </source>
</evidence>
<evidence type="ECO:0000303" key="13">
    <source ref="1"/>
</evidence>
<evidence type="ECO:0000305" key="14"/>
<evidence type="ECO:0000305" key="15">
    <source ref="1"/>
</evidence>
<feature type="chain" id="PRO_0000453327" description="Cytochrome P450 71D180">
    <location>
        <begin position="1"/>
        <end position="496"/>
    </location>
</feature>
<feature type="transmembrane region" description="Helical; Signal-anchor for type II membrane protein" evidence="2">
    <location>
        <begin position="1"/>
        <end position="21"/>
    </location>
</feature>
<feature type="region of interest" description="Disordered" evidence="3">
    <location>
        <begin position="471"/>
        <end position="496"/>
    </location>
</feature>
<feature type="binding site" description="axial binding residue" evidence="1">
    <location>
        <position position="435"/>
    </location>
    <ligand>
        <name>heme</name>
        <dbReference type="ChEBI" id="CHEBI:30413"/>
    </ligand>
    <ligandPart>
        <name>Fe</name>
        <dbReference type="ChEBI" id="CHEBI:18248"/>
    </ligandPart>
</feature>